<dbReference type="EC" id="1.1.1.1"/>
<dbReference type="EMBL" id="X54116">
    <property type="protein sequence ID" value="CAA38057.1"/>
    <property type="molecule type" value="Genomic_DNA"/>
</dbReference>
<dbReference type="EMBL" id="CH954177">
    <property type="protein sequence ID" value="EDV57956.1"/>
    <property type="molecule type" value="Genomic_DNA"/>
</dbReference>
<dbReference type="SMR" id="P28483"/>
<dbReference type="EnsemblMetazoa" id="FBtr0145174">
    <property type="protein sequence ID" value="FBpp0143666"/>
    <property type="gene ID" value="FBgn0012261"/>
</dbReference>
<dbReference type="EnsemblMetazoa" id="XM_001968861.3">
    <property type="protein sequence ID" value="XP_001968897.1"/>
    <property type="gene ID" value="LOC6540581"/>
</dbReference>
<dbReference type="GeneID" id="6540581"/>
<dbReference type="KEGG" id="der:6540581"/>
<dbReference type="eggNOG" id="KOG4169">
    <property type="taxonomic scope" value="Eukaryota"/>
</dbReference>
<dbReference type="HOGENOM" id="CLU_010194_2_16_1"/>
<dbReference type="OMA" id="WSKHWDS"/>
<dbReference type="OrthoDB" id="417891at2759"/>
<dbReference type="PhylomeDB" id="P28483"/>
<dbReference type="ChiTaRS" id="Adh">
    <property type="organism name" value="fly"/>
</dbReference>
<dbReference type="Proteomes" id="UP000008711">
    <property type="component" value="Unassembled WGS sequence"/>
</dbReference>
<dbReference type="GO" id="GO:0005829">
    <property type="term" value="C:cytosol"/>
    <property type="evidence" value="ECO:0007669"/>
    <property type="project" value="EnsemblMetazoa"/>
</dbReference>
<dbReference type="GO" id="GO:0004022">
    <property type="term" value="F:alcohol dehydrogenase (NAD+) activity"/>
    <property type="evidence" value="ECO:0000250"/>
    <property type="project" value="UniProtKB"/>
</dbReference>
<dbReference type="GO" id="GO:0004029">
    <property type="term" value="F:aldehyde dehydrogenase (NAD+) activity"/>
    <property type="evidence" value="ECO:0007669"/>
    <property type="project" value="EnsemblMetazoa"/>
</dbReference>
<dbReference type="GO" id="GO:0042803">
    <property type="term" value="F:protein homodimerization activity"/>
    <property type="evidence" value="ECO:0007669"/>
    <property type="project" value="EnsemblMetazoa"/>
</dbReference>
<dbReference type="GO" id="GO:0006117">
    <property type="term" value="P:acetaldehyde metabolic process"/>
    <property type="evidence" value="ECO:0007669"/>
    <property type="project" value="EnsemblMetazoa"/>
</dbReference>
<dbReference type="GO" id="GO:0019431">
    <property type="term" value="P:acetyl-CoA biosynthetic process from ethanol"/>
    <property type="evidence" value="ECO:0007669"/>
    <property type="project" value="EnsemblMetazoa"/>
</dbReference>
<dbReference type="GO" id="GO:0046164">
    <property type="term" value="P:alcohol catabolic process"/>
    <property type="evidence" value="ECO:0007669"/>
    <property type="project" value="EnsemblMetazoa"/>
</dbReference>
<dbReference type="GO" id="GO:0048149">
    <property type="term" value="P:behavioral response to ethanol"/>
    <property type="evidence" value="ECO:0007669"/>
    <property type="project" value="EnsemblMetazoa"/>
</dbReference>
<dbReference type="GO" id="GO:0006734">
    <property type="term" value="P:NADH metabolic process"/>
    <property type="evidence" value="ECO:0007669"/>
    <property type="project" value="EnsemblMetazoa"/>
</dbReference>
<dbReference type="CDD" id="cd05323">
    <property type="entry name" value="ADH_SDR_c_like"/>
    <property type="match status" value="1"/>
</dbReference>
<dbReference type="FunFam" id="3.40.50.720:FF:000302">
    <property type="entry name" value="Alcohol dehydrogenase"/>
    <property type="match status" value="1"/>
</dbReference>
<dbReference type="Gene3D" id="3.40.50.720">
    <property type="entry name" value="NAD(P)-binding Rossmann-like Domain"/>
    <property type="match status" value="1"/>
</dbReference>
<dbReference type="InterPro" id="IPR002425">
    <property type="entry name" value="ADH_Drosophila-type"/>
</dbReference>
<dbReference type="InterPro" id="IPR036291">
    <property type="entry name" value="NAD(P)-bd_dom_sf"/>
</dbReference>
<dbReference type="InterPro" id="IPR020904">
    <property type="entry name" value="Sc_DH/Rdtase_CS"/>
</dbReference>
<dbReference type="InterPro" id="IPR002347">
    <property type="entry name" value="SDR_fam"/>
</dbReference>
<dbReference type="PANTHER" id="PTHR42901">
    <property type="entry name" value="ALCOHOL DEHYDROGENASE"/>
    <property type="match status" value="1"/>
</dbReference>
<dbReference type="PANTHER" id="PTHR42901:SF1">
    <property type="entry name" value="ALCOHOL DEHYDROGENASE"/>
    <property type="match status" value="1"/>
</dbReference>
<dbReference type="Pfam" id="PF00106">
    <property type="entry name" value="adh_short"/>
    <property type="match status" value="1"/>
</dbReference>
<dbReference type="PRINTS" id="PR01168">
    <property type="entry name" value="ALCDHDRGNASE"/>
</dbReference>
<dbReference type="PRINTS" id="PR01167">
    <property type="entry name" value="INSADHFAMILY"/>
</dbReference>
<dbReference type="PRINTS" id="PR00080">
    <property type="entry name" value="SDRFAMILY"/>
</dbReference>
<dbReference type="SUPFAM" id="SSF51735">
    <property type="entry name" value="NAD(P)-binding Rossmann-fold domains"/>
    <property type="match status" value="1"/>
</dbReference>
<dbReference type="PROSITE" id="PS00061">
    <property type="entry name" value="ADH_SHORT"/>
    <property type="match status" value="1"/>
</dbReference>
<proteinExistence type="inferred from homology"/>
<gene>
    <name type="primary">Adh</name>
    <name type="ORF">GG25120</name>
</gene>
<feature type="initiator methionine" description="Removed" evidence="1">
    <location>
        <position position="1"/>
    </location>
</feature>
<feature type="chain" id="PRO_0000054460" description="Alcohol dehydrogenase">
    <location>
        <begin position="2"/>
        <end position="256"/>
    </location>
</feature>
<feature type="active site" description="Proton acceptor" evidence="2">
    <location>
        <position position="153"/>
    </location>
</feature>
<feature type="binding site" evidence="1">
    <location>
        <begin position="12"/>
        <end position="35"/>
    </location>
    <ligand>
        <name>NAD(+)</name>
        <dbReference type="ChEBI" id="CHEBI:57540"/>
    </ligand>
</feature>
<feature type="binding site" evidence="1">
    <location>
        <position position="140"/>
    </location>
    <ligand>
        <name>substrate</name>
    </ligand>
</feature>
<comment type="catalytic activity">
    <reaction evidence="2">
        <text>a primary alcohol + NAD(+) = an aldehyde + NADH + H(+)</text>
        <dbReference type="Rhea" id="RHEA:10736"/>
        <dbReference type="ChEBI" id="CHEBI:15378"/>
        <dbReference type="ChEBI" id="CHEBI:15734"/>
        <dbReference type="ChEBI" id="CHEBI:17478"/>
        <dbReference type="ChEBI" id="CHEBI:57540"/>
        <dbReference type="ChEBI" id="CHEBI:57945"/>
        <dbReference type="EC" id="1.1.1.1"/>
    </reaction>
</comment>
<comment type="catalytic activity">
    <reaction evidence="2">
        <text>a secondary alcohol + NAD(+) = a ketone + NADH + H(+)</text>
        <dbReference type="Rhea" id="RHEA:10740"/>
        <dbReference type="ChEBI" id="CHEBI:15378"/>
        <dbReference type="ChEBI" id="CHEBI:17087"/>
        <dbReference type="ChEBI" id="CHEBI:35681"/>
        <dbReference type="ChEBI" id="CHEBI:57540"/>
        <dbReference type="ChEBI" id="CHEBI:57945"/>
        <dbReference type="EC" id="1.1.1.1"/>
    </reaction>
</comment>
<comment type="subunit">
    <text>Homodimer.</text>
</comment>
<comment type="similarity">
    <text evidence="3">Belongs to the short-chain dehydrogenases/reductases (SDR) family.</text>
</comment>
<evidence type="ECO:0000250" key="1"/>
<evidence type="ECO:0000255" key="2">
    <source>
        <dbReference type="PROSITE-ProRule" id="PRU10001"/>
    </source>
</evidence>
<evidence type="ECO:0000305" key="3"/>
<keyword id="KW-0520">NAD</keyword>
<keyword id="KW-0560">Oxidoreductase</keyword>
<sequence>MAFTLTNKNVIFVAGLGGIGLDTSKELVKRDLKNLVILDRIENPAAIAELKAINPKVTVTFYPYDVTVPIAETSKLLKTIFAKLTTVDVLINGAGILDDYQIERTIAVNYTGLVNTTTAILDFWDKRKGGPGGIICNIGSVTGFNAIYQVPVYSGTKAAVVNFTSSLAKLAPITGVTAYTVNPGITRTTLVHKFNSWLDVEPQVAEKLLAHPTQTSLSCAENFVKAIELNENGAIWKLDLGTLEAIQWSKHWDSGI</sequence>
<accession>P28483</accession>
<accession>B3N5C6</accession>
<organism>
    <name type="scientific">Drosophila erecta</name>
    <name type="common">Fruit fly</name>
    <dbReference type="NCBI Taxonomy" id="7220"/>
    <lineage>
        <taxon>Eukaryota</taxon>
        <taxon>Metazoa</taxon>
        <taxon>Ecdysozoa</taxon>
        <taxon>Arthropoda</taxon>
        <taxon>Hexapoda</taxon>
        <taxon>Insecta</taxon>
        <taxon>Pterygota</taxon>
        <taxon>Neoptera</taxon>
        <taxon>Endopterygota</taxon>
        <taxon>Diptera</taxon>
        <taxon>Brachycera</taxon>
        <taxon>Muscomorpha</taxon>
        <taxon>Ephydroidea</taxon>
        <taxon>Drosophilidae</taxon>
        <taxon>Drosophila</taxon>
        <taxon>Sophophora</taxon>
    </lineage>
</organism>
<protein>
    <recommendedName>
        <fullName>Alcohol dehydrogenase</fullName>
        <ecNumber>1.1.1.1</ecNumber>
    </recommendedName>
</protein>
<name>ADH_DROER</name>
<reference key="1">
    <citation type="journal article" date="1994" name="Mol. Biol. Evol.">
        <title>The molecular evolution of the alcohol dehydrogenase and alcohol dehydrogenase-related genes in the Drosophila melanogaster species subgroup.</title>
        <authorList>
            <person name="Jeffs P.S."/>
            <person name="Holmes E.C."/>
            <person name="Ashburner M."/>
        </authorList>
    </citation>
    <scope>NUCLEOTIDE SEQUENCE [GENOMIC DNA]</scope>
    <source>
        <strain>Gif-sur-Yvette stock 154.1</strain>
    </source>
</reference>
<reference key="2">
    <citation type="journal article" date="2007" name="Nature">
        <title>Evolution of genes and genomes on the Drosophila phylogeny.</title>
        <authorList>
            <consortium name="Drosophila 12 genomes consortium"/>
        </authorList>
    </citation>
    <scope>NUCLEOTIDE SEQUENCE [LARGE SCALE GENOMIC DNA]</scope>
    <source>
        <strain>Tucson 14021-0224.01</strain>
    </source>
</reference>